<gene>
    <name evidence="1" type="primary">yaaA</name>
    <name type="ordered locus">ECS88_0006</name>
</gene>
<protein>
    <recommendedName>
        <fullName evidence="1">UPF0246 protein YaaA</fullName>
    </recommendedName>
</protein>
<proteinExistence type="inferred from homology"/>
<reference key="1">
    <citation type="journal article" date="2009" name="PLoS Genet.">
        <title>Organised genome dynamics in the Escherichia coli species results in highly diverse adaptive paths.</title>
        <authorList>
            <person name="Touchon M."/>
            <person name="Hoede C."/>
            <person name="Tenaillon O."/>
            <person name="Barbe V."/>
            <person name="Baeriswyl S."/>
            <person name="Bidet P."/>
            <person name="Bingen E."/>
            <person name="Bonacorsi S."/>
            <person name="Bouchier C."/>
            <person name="Bouvet O."/>
            <person name="Calteau A."/>
            <person name="Chiapello H."/>
            <person name="Clermont O."/>
            <person name="Cruveiller S."/>
            <person name="Danchin A."/>
            <person name="Diard M."/>
            <person name="Dossat C."/>
            <person name="Karoui M.E."/>
            <person name="Frapy E."/>
            <person name="Garry L."/>
            <person name="Ghigo J.M."/>
            <person name="Gilles A.M."/>
            <person name="Johnson J."/>
            <person name="Le Bouguenec C."/>
            <person name="Lescat M."/>
            <person name="Mangenot S."/>
            <person name="Martinez-Jehanne V."/>
            <person name="Matic I."/>
            <person name="Nassif X."/>
            <person name="Oztas S."/>
            <person name="Petit M.A."/>
            <person name="Pichon C."/>
            <person name="Rouy Z."/>
            <person name="Ruf C.S."/>
            <person name="Schneider D."/>
            <person name="Tourret J."/>
            <person name="Vacherie B."/>
            <person name="Vallenet D."/>
            <person name="Medigue C."/>
            <person name="Rocha E.P.C."/>
            <person name="Denamur E."/>
        </authorList>
    </citation>
    <scope>NUCLEOTIDE SEQUENCE [LARGE SCALE GENOMIC DNA]</scope>
    <source>
        <strain>S88 / ExPEC</strain>
    </source>
</reference>
<comment type="similarity">
    <text evidence="1">Belongs to the UPF0246 family.</text>
</comment>
<feature type="chain" id="PRO_1000131111" description="UPF0246 protein YaaA">
    <location>
        <begin position="1"/>
        <end position="258"/>
    </location>
</feature>
<dbReference type="EMBL" id="CU928161">
    <property type="protein sequence ID" value="CAR01373.1"/>
    <property type="molecule type" value="Genomic_DNA"/>
</dbReference>
<dbReference type="RefSeq" id="WP_000906189.1">
    <property type="nucleotide sequence ID" value="NC_011742.1"/>
</dbReference>
<dbReference type="SMR" id="B7M9R9"/>
<dbReference type="KEGG" id="ecz:ECS88_0006"/>
<dbReference type="HOGENOM" id="CLU_061989_0_0_6"/>
<dbReference type="Proteomes" id="UP000000747">
    <property type="component" value="Chromosome"/>
</dbReference>
<dbReference type="GO" id="GO:0005829">
    <property type="term" value="C:cytosol"/>
    <property type="evidence" value="ECO:0007669"/>
    <property type="project" value="TreeGrafter"/>
</dbReference>
<dbReference type="GO" id="GO:0033194">
    <property type="term" value="P:response to hydroperoxide"/>
    <property type="evidence" value="ECO:0007669"/>
    <property type="project" value="TreeGrafter"/>
</dbReference>
<dbReference type="HAMAP" id="MF_00652">
    <property type="entry name" value="UPF0246"/>
    <property type="match status" value="1"/>
</dbReference>
<dbReference type="InterPro" id="IPR005583">
    <property type="entry name" value="YaaA"/>
</dbReference>
<dbReference type="NCBIfam" id="NF002541">
    <property type="entry name" value="PRK02101.1-1"/>
    <property type="match status" value="1"/>
</dbReference>
<dbReference type="NCBIfam" id="NF002542">
    <property type="entry name" value="PRK02101.1-3"/>
    <property type="match status" value="1"/>
</dbReference>
<dbReference type="PANTHER" id="PTHR30283:SF4">
    <property type="entry name" value="PEROXIDE STRESS RESISTANCE PROTEIN YAAA"/>
    <property type="match status" value="1"/>
</dbReference>
<dbReference type="PANTHER" id="PTHR30283">
    <property type="entry name" value="PEROXIDE STRESS RESPONSE PROTEIN YAAA"/>
    <property type="match status" value="1"/>
</dbReference>
<dbReference type="Pfam" id="PF03883">
    <property type="entry name" value="H2O2_YaaD"/>
    <property type="match status" value="1"/>
</dbReference>
<evidence type="ECO:0000255" key="1">
    <source>
        <dbReference type="HAMAP-Rule" id="MF_00652"/>
    </source>
</evidence>
<name>YAAA_ECO45</name>
<keyword id="KW-1185">Reference proteome</keyword>
<organism>
    <name type="scientific">Escherichia coli O45:K1 (strain S88 / ExPEC)</name>
    <dbReference type="NCBI Taxonomy" id="585035"/>
    <lineage>
        <taxon>Bacteria</taxon>
        <taxon>Pseudomonadati</taxon>
        <taxon>Pseudomonadota</taxon>
        <taxon>Gammaproteobacteria</taxon>
        <taxon>Enterobacterales</taxon>
        <taxon>Enterobacteriaceae</taxon>
        <taxon>Escherichia</taxon>
    </lineage>
</organism>
<accession>B7M9R9</accession>
<sequence>MLILISPAKTLDYQSPLTTTRYTLPELLDNAQQLIHEARKLTPPQISSLMRISDKLAGINAARFHDWQPNFTPENARQAILVFKGDVYTGLQAETFSEDDFDFAQQHLRMLSGLYGVLRPLDLMQPYRLEMGIRLENARGKDLYQFWGDIITNKLNEALAAQGDNVVINLASDEYFKSVKPKKLNAEIIKPVFLDEKNGKFKIISFYAKKARGLMSRFIIENRLTKPEQLTGFNSEGYFFDEASSSNGELVFKRYEQR</sequence>